<sequence length="634" mass="74708">MRRPKKYESGEATQYISRRAALRRLQLSLNDFRRLCILKGVYPREPKHRRRAQKGSSEIKILYHAKDIRFLLHESIVWTLRDYKIFAKKSGRDRAIKDFRNLKRRLALFPEIKLDHIVKERYPTFIDALKDLDDCLTLLFLFSTFPSLHLIPREQSALCRRLTIEFLHYVIASKSLRKVFISIKGYYFQAEIKGQKVTWIVPHYYPFKPQSRQDVDFKVMSIFVEFYTIMLGFVNFRLFHGLNLAYPPQFPSSVLQDNSETLQDESSFVSDRIAALNFELLRTDKLMEDEEELDIDMELLEQDGDSKRIIKMKQEAQEVARLRTLFKGLKFFINREVPREPLIILIRSFGGKVSWDASVFAGATFDESDETITHQIVDRPSLSTQYISRDYIQPQWVFDCINQRQLLPTNKYFMGEQLPPHLSPFVDSKRETYIPPEEKALHDPSLIETHVQSDDDDDDSDAEADNQEEEEIEQQLLDAQLQRAYQQETAEYKKYGGTDGVNEDEEDSVDDDDEEDEEEEEEEDVEQLDDKTKRLLEEKQKMKVESGKVHKVNKRQIRKAEVDEHRLQARMVKPRHRNLFRKLIREKQTKEKEEWLLRKKRRNIDADAKEAKKTAKREAKKAAAEAAAKALKMA</sequence>
<dbReference type="EMBL" id="CH964239">
    <property type="protein sequence ID" value="EDW82025.1"/>
    <property type="molecule type" value="Genomic_DNA"/>
</dbReference>
<dbReference type="SMR" id="B4NE56"/>
<dbReference type="STRING" id="7260.B4NE56"/>
<dbReference type="EnsemblMetazoa" id="FBtr0256000">
    <property type="protein sequence ID" value="FBpp0254492"/>
    <property type="gene ID" value="FBgn0227308"/>
</dbReference>
<dbReference type="EnsemblMetazoa" id="XM_002071003.4">
    <property type="protein sequence ID" value="XP_002071039.1"/>
    <property type="gene ID" value="LOC6649118"/>
</dbReference>
<dbReference type="GeneID" id="6649118"/>
<dbReference type="KEGG" id="dwi:6649118"/>
<dbReference type="eggNOG" id="KOG2481">
    <property type="taxonomic scope" value="Eukaryota"/>
</dbReference>
<dbReference type="HOGENOM" id="CLU_019619_0_0_1"/>
<dbReference type="OMA" id="QKVTWIV"/>
<dbReference type="OrthoDB" id="10264910at2759"/>
<dbReference type="PhylomeDB" id="B4NE56"/>
<dbReference type="Proteomes" id="UP000007798">
    <property type="component" value="Unassembled WGS sequence"/>
</dbReference>
<dbReference type="GO" id="GO:0005730">
    <property type="term" value="C:nucleolus"/>
    <property type="evidence" value="ECO:0000250"/>
    <property type="project" value="UniProtKB"/>
</dbReference>
<dbReference type="GO" id="GO:0005654">
    <property type="term" value="C:nucleoplasm"/>
    <property type="evidence" value="ECO:0000250"/>
    <property type="project" value="UniProtKB"/>
</dbReference>
<dbReference type="GO" id="GO:0070545">
    <property type="term" value="C:PeBoW complex"/>
    <property type="evidence" value="ECO:0007669"/>
    <property type="project" value="TreeGrafter"/>
</dbReference>
<dbReference type="GO" id="GO:0030687">
    <property type="term" value="C:preribosome, large subunit precursor"/>
    <property type="evidence" value="ECO:0007669"/>
    <property type="project" value="UniProtKB-UniRule"/>
</dbReference>
<dbReference type="GO" id="GO:0043021">
    <property type="term" value="F:ribonucleoprotein complex binding"/>
    <property type="evidence" value="ECO:0007669"/>
    <property type="project" value="UniProtKB-UniRule"/>
</dbReference>
<dbReference type="GO" id="GO:0003723">
    <property type="term" value="F:RNA binding"/>
    <property type="evidence" value="ECO:0007669"/>
    <property type="project" value="TreeGrafter"/>
</dbReference>
<dbReference type="GO" id="GO:0000466">
    <property type="term" value="P:maturation of 5.8S rRNA from tricistronic rRNA transcript (SSU-rRNA, 5.8S rRNA, LSU-rRNA)"/>
    <property type="evidence" value="ECO:0007669"/>
    <property type="project" value="UniProtKB-UniRule"/>
</dbReference>
<dbReference type="GO" id="GO:0000463">
    <property type="term" value="P:maturation of LSU-rRNA from tricistronic rRNA transcript (SSU-rRNA, 5.8S rRNA, LSU-rRNA)"/>
    <property type="evidence" value="ECO:0000250"/>
    <property type="project" value="UniProtKB"/>
</dbReference>
<dbReference type="CDD" id="cd17709">
    <property type="entry name" value="BRCT_pescadillo_like"/>
    <property type="match status" value="1"/>
</dbReference>
<dbReference type="FunFam" id="3.40.50.10190:FF:000002">
    <property type="entry name" value="Pescadillo homolog"/>
    <property type="match status" value="1"/>
</dbReference>
<dbReference type="Gene3D" id="3.40.50.10190">
    <property type="entry name" value="BRCT domain"/>
    <property type="match status" value="1"/>
</dbReference>
<dbReference type="HAMAP" id="MF_03028">
    <property type="entry name" value="Pescadillo"/>
    <property type="match status" value="1"/>
</dbReference>
<dbReference type="InterPro" id="IPR001357">
    <property type="entry name" value="BRCT_dom"/>
</dbReference>
<dbReference type="InterPro" id="IPR036420">
    <property type="entry name" value="BRCT_dom_sf"/>
</dbReference>
<dbReference type="InterPro" id="IPR010613">
    <property type="entry name" value="PES"/>
</dbReference>
<dbReference type="PANTHER" id="PTHR12221">
    <property type="entry name" value="PESCADILLO - RELATED"/>
    <property type="match status" value="1"/>
</dbReference>
<dbReference type="PANTHER" id="PTHR12221:SF6">
    <property type="entry name" value="PESCADILLO HOMOLOG"/>
    <property type="match status" value="1"/>
</dbReference>
<dbReference type="Pfam" id="PF16589">
    <property type="entry name" value="BRCT_2"/>
    <property type="match status" value="1"/>
</dbReference>
<dbReference type="Pfam" id="PF06732">
    <property type="entry name" value="Pescadillo_N"/>
    <property type="match status" value="1"/>
</dbReference>
<dbReference type="SMART" id="SM00292">
    <property type="entry name" value="BRCT"/>
    <property type="match status" value="1"/>
</dbReference>
<dbReference type="SUPFAM" id="SSF52113">
    <property type="entry name" value="BRCT domain"/>
    <property type="match status" value="1"/>
</dbReference>
<dbReference type="PROSITE" id="PS50172">
    <property type="entry name" value="BRCT"/>
    <property type="match status" value="1"/>
</dbReference>
<evidence type="ECO:0000250" key="1"/>
<evidence type="ECO:0000255" key="2">
    <source>
        <dbReference type="HAMAP-Rule" id="MF_03028"/>
    </source>
</evidence>
<evidence type="ECO:0000256" key="3">
    <source>
        <dbReference type="SAM" id="MobiDB-lite"/>
    </source>
</evidence>
<accession>B4NE56</accession>
<reference key="1">
    <citation type="journal article" date="2007" name="Nature">
        <title>Evolution of genes and genomes on the Drosophila phylogeny.</title>
        <authorList>
            <consortium name="Drosophila 12 genomes consortium"/>
        </authorList>
    </citation>
    <scope>NUCLEOTIDE SEQUENCE [LARGE SCALE GENOMIC DNA]</scope>
    <source>
        <strain>Tucson 14030-0811.24</strain>
    </source>
</reference>
<proteinExistence type="inferred from homology"/>
<name>PESC_DROWI</name>
<organism>
    <name type="scientific">Drosophila willistoni</name>
    <name type="common">Fruit fly</name>
    <dbReference type="NCBI Taxonomy" id="7260"/>
    <lineage>
        <taxon>Eukaryota</taxon>
        <taxon>Metazoa</taxon>
        <taxon>Ecdysozoa</taxon>
        <taxon>Arthropoda</taxon>
        <taxon>Hexapoda</taxon>
        <taxon>Insecta</taxon>
        <taxon>Pterygota</taxon>
        <taxon>Neoptera</taxon>
        <taxon>Endopterygota</taxon>
        <taxon>Diptera</taxon>
        <taxon>Brachycera</taxon>
        <taxon>Muscomorpha</taxon>
        <taxon>Ephydroidea</taxon>
        <taxon>Drosophilidae</taxon>
        <taxon>Drosophila</taxon>
        <taxon>Sophophora</taxon>
    </lineage>
</organism>
<gene>
    <name type="ORF">GK25349</name>
</gene>
<protein>
    <recommendedName>
        <fullName evidence="2">Pescadillo homolog</fullName>
    </recommendedName>
</protein>
<keyword id="KW-0175">Coiled coil</keyword>
<keyword id="KW-0539">Nucleus</keyword>
<keyword id="KW-0597">Phosphoprotein</keyword>
<keyword id="KW-1185">Reference proteome</keyword>
<keyword id="KW-0690">Ribosome biogenesis</keyword>
<keyword id="KW-0698">rRNA processing</keyword>
<comment type="function">
    <text evidence="2">Required for maturation of ribosomal RNAs and formation of the large ribosomal subunit.</text>
</comment>
<comment type="subcellular location">
    <subcellularLocation>
        <location evidence="2">Nucleus</location>
        <location evidence="2">Nucleolus</location>
    </subcellularLocation>
    <subcellularLocation>
        <location evidence="2">Nucleus</location>
        <location evidence="2">Nucleoplasm</location>
    </subcellularLocation>
</comment>
<comment type="similarity">
    <text evidence="2">Belongs to the pescadillo family.</text>
</comment>
<feature type="chain" id="PRO_0000370462" description="Pescadillo homolog">
    <location>
        <begin position="1"/>
        <end position="634"/>
    </location>
</feature>
<feature type="domain" description="BRCT" evidence="2">
    <location>
        <begin position="321"/>
        <end position="414"/>
    </location>
</feature>
<feature type="region of interest" description="Disordered" evidence="3">
    <location>
        <begin position="437"/>
        <end position="473"/>
    </location>
</feature>
<feature type="region of interest" description="Disordered" evidence="3">
    <location>
        <begin position="491"/>
        <end position="561"/>
    </location>
</feature>
<feature type="region of interest" description="Disordered" evidence="3">
    <location>
        <begin position="603"/>
        <end position="634"/>
    </location>
</feature>
<feature type="coiled-coil region" evidence="2">
    <location>
        <begin position="460"/>
        <end position="546"/>
    </location>
</feature>
<feature type="coiled-coil region" evidence="2">
    <location>
        <begin position="596"/>
        <end position="629"/>
    </location>
</feature>
<feature type="compositionally biased region" description="Acidic residues" evidence="3">
    <location>
        <begin position="454"/>
        <end position="473"/>
    </location>
</feature>
<feature type="compositionally biased region" description="Acidic residues" evidence="3">
    <location>
        <begin position="501"/>
        <end position="527"/>
    </location>
</feature>
<feature type="compositionally biased region" description="Basic and acidic residues" evidence="3">
    <location>
        <begin position="528"/>
        <end position="548"/>
    </location>
</feature>
<feature type="compositionally biased region" description="Basic and acidic residues" evidence="3">
    <location>
        <begin position="603"/>
        <end position="623"/>
    </location>
</feature>
<feature type="compositionally biased region" description="Low complexity" evidence="3">
    <location>
        <begin position="624"/>
        <end position="634"/>
    </location>
</feature>
<feature type="modified residue" description="Phosphoserine" evidence="1">
    <location>
        <position position="453"/>
    </location>
</feature>